<proteinExistence type="evidence at transcript level"/>
<comment type="function">
    <text evidence="1">Adapter protein that plays a role in regulating cell-surface expression of adrenergic receptors and probably also other G protein-coupled receptors. Plays a role in NEDD4-mediated ubiquitination and endocytosis af activated ADRB2 and subsequent ADRB2 degradation. May recruit NEDD4 to ADRB2. Alternatively, may function as adapter protein that does not play a major role in recruiting NEDD4 to ADRB2, but rather plays a role in a targeting ADRB2 to endosomes.</text>
</comment>
<comment type="subunit">
    <text evidence="1">Interacts (via PPxY motifs) with NEDD4 (via WW domains). Interacts with ADRB2. Interacts with ADRB3. Interacts with HGS (via PPxY motifs). Does not bind TXN (thioredoxin). Interacts with ITCH.</text>
</comment>
<comment type="subcellular location">
    <subcellularLocation>
        <location evidence="1">Cytoplasm</location>
    </subcellularLocation>
    <subcellularLocation>
        <location evidence="1">Cell membrane</location>
        <topology evidence="1">Peripheral membrane protein</topology>
        <orientation evidence="1">Cytoplasmic side</orientation>
    </subcellularLocation>
    <subcellularLocation>
        <location evidence="1">Lysosome</location>
    </subcellularLocation>
    <subcellularLocation>
        <location evidence="1">Endosome</location>
    </subcellularLocation>
    <subcellularLocation>
        <location evidence="1">Early endosome</location>
    </subcellularLocation>
    <text evidence="1">Associated with plasma membrane, as well as with endosomes and lysosomes during endocytosis.</text>
</comment>
<comment type="similarity">
    <text evidence="3">Belongs to the arrestin family.</text>
</comment>
<evidence type="ECO:0000250" key="1">
    <source>
        <dbReference type="UniProtKB" id="Q96B67"/>
    </source>
</evidence>
<evidence type="ECO:0000256" key="2">
    <source>
        <dbReference type="SAM" id="MobiDB-lite"/>
    </source>
</evidence>
<evidence type="ECO:0000305" key="3"/>
<reference key="1">
    <citation type="submission" date="2003-09" db="EMBL/GenBank/DDBJ databases">
        <title>Liver regeneration after PH.</title>
        <authorList>
            <person name="Xu C.S."/>
            <person name="Chang C.F."/>
            <person name="Han H.P."/>
            <person name="Wang G.P."/>
            <person name="Chai L.Q."/>
            <person name="Yuan J.Y."/>
            <person name="Yang K.J."/>
            <person name="Zhao L.F."/>
            <person name="Ma H."/>
            <person name="Wang L."/>
            <person name="Wang S.F."/>
            <person name="Xing X.K."/>
            <person name="Shen G.M."/>
            <person name="Shi J.B."/>
            <person name="Rahman S."/>
            <person name="Wang Q.N."/>
            <person name="Zhang J.B."/>
        </authorList>
    </citation>
    <scope>NUCLEOTIDE SEQUENCE [LARGE SCALE MRNA]</scope>
    <source>
        <strain>Sprague-Dawley</strain>
        <tissue>Liver</tissue>
    </source>
</reference>
<feature type="chain" id="PRO_0000244352" description="Arrestin domain-containing protein 3">
    <location>
        <begin position="1"/>
        <end position="414"/>
    </location>
</feature>
<feature type="region of interest" description="Disordered" evidence="2">
    <location>
        <begin position="393"/>
        <end position="414"/>
    </location>
</feature>
<feature type="short sequence motif" description="PPxY motif 1" evidence="3">
    <location>
        <begin position="346"/>
        <end position="349"/>
    </location>
</feature>
<feature type="short sequence motif" description="PPxY motif 2" evidence="3">
    <location>
        <begin position="391"/>
        <end position="394"/>
    </location>
</feature>
<feature type="compositionally biased region" description="Basic and acidic residues" evidence="2">
    <location>
        <begin position="405"/>
        <end position="414"/>
    </location>
</feature>
<dbReference type="EMBL" id="AY383703">
    <property type="protein sequence ID" value="AAQ96261.1"/>
    <property type="molecule type" value="mRNA"/>
</dbReference>
<dbReference type="RefSeq" id="NP_001007798.1">
    <property type="nucleotide sequence ID" value="NM_001007797.2"/>
</dbReference>
<dbReference type="SMR" id="Q6TXF1"/>
<dbReference type="FunCoup" id="Q6TXF1">
    <property type="interactions" value="498"/>
</dbReference>
<dbReference type="STRING" id="10116.ENSRNOP00000067658"/>
<dbReference type="PhosphoSitePlus" id="Q6TXF1"/>
<dbReference type="PaxDb" id="10116-ENSRNOP00000067658"/>
<dbReference type="Ensembl" id="ENSRNOT00000106948.1">
    <property type="protein sequence ID" value="ENSRNOP00000078331.1"/>
    <property type="gene ID" value="ENSRNOG00000045649.3"/>
</dbReference>
<dbReference type="GeneID" id="309945"/>
<dbReference type="KEGG" id="rno:309945"/>
<dbReference type="AGR" id="RGD:1359478"/>
<dbReference type="CTD" id="57561"/>
<dbReference type="RGD" id="1359478">
    <property type="gene designation" value="Arrdc3"/>
</dbReference>
<dbReference type="eggNOG" id="KOG3780">
    <property type="taxonomic scope" value="Eukaryota"/>
</dbReference>
<dbReference type="GeneTree" id="ENSGT00940000155411"/>
<dbReference type="HOGENOM" id="CLU_039221_1_1_1"/>
<dbReference type="InParanoid" id="Q6TXF1"/>
<dbReference type="OrthoDB" id="6642at9989"/>
<dbReference type="PhylomeDB" id="Q6TXF1"/>
<dbReference type="PRO" id="PR:Q6TXF1"/>
<dbReference type="Proteomes" id="UP000002494">
    <property type="component" value="Chromosome 2"/>
</dbReference>
<dbReference type="Bgee" id="ENSRNOG00000045649">
    <property type="expression patterns" value="Expressed in lung and 18 other cell types or tissues"/>
</dbReference>
<dbReference type="GO" id="GO:0005737">
    <property type="term" value="C:cytoplasm"/>
    <property type="evidence" value="ECO:0000318"/>
    <property type="project" value="GO_Central"/>
</dbReference>
<dbReference type="GO" id="GO:0005769">
    <property type="term" value="C:early endosome"/>
    <property type="evidence" value="ECO:0007669"/>
    <property type="project" value="UniProtKB-SubCell"/>
</dbReference>
<dbReference type="GO" id="GO:0005768">
    <property type="term" value="C:endosome"/>
    <property type="evidence" value="ECO:0000266"/>
    <property type="project" value="RGD"/>
</dbReference>
<dbReference type="GO" id="GO:0005764">
    <property type="term" value="C:lysosome"/>
    <property type="evidence" value="ECO:0007669"/>
    <property type="project" value="UniProtKB-SubCell"/>
</dbReference>
<dbReference type="GO" id="GO:0005886">
    <property type="term" value="C:plasma membrane"/>
    <property type="evidence" value="ECO:0000266"/>
    <property type="project" value="RGD"/>
</dbReference>
<dbReference type="GO" id="GO:0031699">
    <property type="term" value="F:beta-3 adrenergic receptor binding"/>
    <property type="evidence" value="ECO:0000266"/>
    <property type="project" value="RGD"/>
</dbReference>
<dbReference type="GO" id="GO:0060613">
    <property type="term" value="P:fat pad development"/>
    <property type="evidence" value="ECO:0000266"/>
    <property type="project" value="RGD"/>
</dbReference>
<dbReference type="GO" id="GO:0031649">
    <property type="term" value="P:heat generation"/>
    <property type="evidence" value="ECO:0000266"/>
    <property type="project" value="RGD"/>
</dbReference>
<dbReference type="GO" id="GO:0071878">
    <property type="term" value="P:negative regulation of adenylate cyclase-activating adrenergic receptor signaling pathway"/>
    <property type="evidence" value="ECO:0000266"/>
    <property type="project" value="RGD"/>
</dbReference>
<dbReference type="GO" id="GO:0120163">
    <property type="term" value="P:negative regulation of cold-induced thermogenesis"/>
    <property type="evidence" value="ECO:0000250"/>
    <property type="project" value="YuBioLab"/>
</dbReference>
<dbReference type="GO" id="GO:0031651">
    <property type="term" value="P:negative regulation of heat generation"/>
    <property type="evidence" value="ECO:0000266"/>
    <property type="project" value="RGD"/>
</dbReference>
<dbReference type="GO" id="GO:0090327">
    <property type="term" value="P:negative regulation of locomotion involved in locomotory behavior"/>
    <property type="evidence" value="ECO:0000266"/>
    <property type="project" value="RGD"/>
</dbReference>
<dbReference type="GO" id="GO:0035332">
    <property type="term" value="P:positive regulation of hippo signaling"/>
    <property type="evidence" value="ECO:0000266"/>
    <property type="project" value="RGD"/>
</dbReference>
<dbReference type="GO" id="GO:0015031">
    <property type="term" value="P:protein transport"/>
    <property type="evidence" value="ECO:0000318"/>
    <property type="project" value="GO_Central"/>
</dbReference>
<dbReference type="GO" id="GO:0043588">
    <property type="term" value="P:skin development"/>
    <property type="evidence" value="ECO:0000266"/>
    <property type="project" value="RGD"/>
</dbReference>
<dbReference type="GO" id="GO:0001659">
    <property type="term" value="P:temperature homeostasis"/>
    <property type="evidence" value="ECO:0000266"/>
    <property type="project" value="RGD"/>
</dbReference>
<dbReference type="FunFam" id="2.60.40.640:FF:000005">
    <property type="entry name" value="Arrestin domain-containing protein 3"/>
    <property type="match status" value="1"/>
</dbReference>
<dbReference type="FunFam" id="2.60.40.640:FF:000007">
    <property type="entry name" value="Arrestin domain-containing protein 3 mRNA"/>
    <property type="match status" value="1"/>
</dbReference>
<dbReference type="Gene3D" id="2.60.40.640">
    <property type="match status" value="2"/>
</dbReference>
<dbReference type="InterPro" id="IPR014752">
    <property type="entry name" value="Arrestin-like_C"/>
</dbReference>
<dbReference type="InterPro" id="IPR011021">
    <property type="entry name" value="Arrestin-like_N"/>
</dbReference>
<dbReference type="InterPro" id="IPR011022">
    <property type="entry name" value="Arrestin_C-like"/>
</dbReference>
<dbReference type="InterPro" id="IPR050357">
    <property type="entry name" value="Arrestin_domain-protein"/>
</dbReference>
<dbReference type="InterPro" id="IPR014756">
    <property type="entry name" value="Ig_E-set"/>
</dbReference>
<dbReference type="PANTHER" id="PTHR11188">
    <property type="entry name" value="ARRESTIN DOMAIN CONTAINING PROTEIN"/>
    <property type="match status" value="1"/>
</dbReference>
<dbReference type="PANTHER" id="PTHR11188:SF49">
    <property type="entry name" value="ARRESTIN DOMAIN-CONTAINING PROTEIN 3"/>
    <property type="match status" value="1"/>
</dbReference>
<dbReference type="Pfam" id="PF02752">
    <property type="entry name" value="Arrestin_C"/>
    <property type="match status" value="1"/>
</dbReference>
<dbReference type="Pfam" id="PF00339">
    <property type="entry name" value="Arrestin_N"/>
    <property type="match status" value="1"/>
</dbReference>
<dbReference type="SMART" id="SM01017">
    <property type="entry name" value="Arrestin_C"/>
    <property type="match status" value="1"/>
</dbReference>
<dbReference type="SUPFAM" id="SSF81296">
    <property type="entry name" value="E set domains"/>
    <property type="match status" value="2"/>
</dbReference>
<keyword id="KW-1003">Cell membrane</keyword>
<keyword id="KW-0963">Cytoplasm</keyword>
<keyword id="KW-0967">Endosome</keyword>
<keyword id="KW-0458">Lysosome</keyword>
<keyword id="KW-0472">Membrane</keyword>
<keyword id="KW-1185">Reference proteome</keyword>
<keyword id="KW-0677">Repeat</keyword>
<accession>Q6TXF1</accession>
<gene>
    <name type="primary">Arrdc3</name>
</gene>
<protein>
    <recommendedName>
        <fullName>Arrestin domain-containing protein 3</fullName>
    </recommendedName>
    <alternativeName>
        <fullName>Liver regeneration-related protein LRRG00048</fullName>
    </alternativeName>
</protein>
<sequence>MVLGKVKSLTISFDCLNDSNVPVYSSGDTVSGRVNLEVTGEIRVKSLKIHARGHAKVRWTESRNAGSNTAYTQNYTEEVEYFNHKDILIGHERDDDNCEEGFSTIHSGRHEYAFSFELPQTPLATSFEGRHGSVRYWVKAELHRPWLLPVKLKKEFTVFEHIDINTPSLLSPQAGTKEKTLCCWFCTSGPISLSAKIERKGYTPGESIQIFAEIENCSSRMVVPKAAIYQTQAFYAKGKMKEVKQLVANLRGESLSSGKTETWDGKLLKIPPVSPSILDCSIIRVEYSLMVYVDIPGAMDLLLSLPLVIGTIPLHPFGSRTSSVSSQCSMNMNWLGLSLPERPEAPPSYAEVVTEEQRRNNLAPVSACDDFERALQGPLFAYIQEFRFLPPPLYSEIDPNPDQSSEDRPSCPSR</sequence>
<name>ARRD3_RAT</name>
<organism>
    <name type="scientific">Rattus norvegicus</name>
    <name type="common">Rat</name>
    <dbReference type="NCBI Taxonomy" id="10116"/>
    <lineage>
        <taxon>Eukaryota</taxon>
        <taxon>Metazoa</taxon>
        <taxon>Chordata</taxon>
        <taxon>Craniata</taxon>
        <taxon>Vertebrata</taxon>
        <taxon>Euteleostomi</taxon>
        <taxon>Mammalia</taxon>
        <taxon>Eutheria</taxon>
        <taxon>Euarchontoglires</taxon>
        <taxon>Glires</taxon>
        <taxon>Rodentia</taxon>
        <taxon>Myomorpha</taxon>
        <taxon>Muroidea</taxon>
        <taxon>Muridae</taxon>
        <taxon>Murinae</taxon>
        <taxon>Rattus</taxon>
    </lineage>
</organism>